<gene>
    <name type="primary">rpsU</name>
    <name type="ordered locus">lin1506</name>
</gene>
<organism>
    <name type="scientific">Listeria innocua serovar 6a (strain ATCC BAA-680 / CLIP 11262)</name>
    <dbReference type="NCBI Taxonomy" id="272626"/>
    <lineage>
        <taxon>Bacteria</taxon>
        <taxon>Bacillati</taxon>
        <taxon>Bacillota</taxon>
        <taxon>Bacilli</taxon>
        <taxon>Bacillales</taxon>
        <taxon>Listeriaceae</taxon>
        <taxon>Listeria</taxon>
    </lineage>
</organism>
<comment type="similarity">
    <text evidence="2">Belongs to the bacterial ribosomal protein bS21 family.</text>
</comment>
<reference key="1">
    <citation type="journal article" date="2001" name="Science">
        <title>Comparative genomics of Listeria species.</title>
        <authorList>
            <person name="Glaser P."/>
            <person name="Frangeul L."/>
            <person name="Buchrieser C."/>
            <person name="Rusniok C."/>
            <person name="Amend A."/>
            <person name="Baquero F."/>
            <person name="Berche P."/>
            <person name="Bloecker H."/>
            <person name="Brandt P."/>
            <person name="Chakraborty T."/>
            <person name="Charbit A."/>
            <person name="Chetouani F."/>
            <person name="Couve E."/>
            <person name="de Daruvar A."/>
            <person name="Dehoux P."/>
            <person name="Domann E."/>
            <person name="Dominguez-Bernal G."/>
            <person name="Duchaud E."/>
            <person name="Durant L."/>
            <person name="Dussurget O."/>
            <person name="Entian K.-D."/>
            <person name="Fsihi H."/>
            <person name="Garcia-del Portillo F."/>
            <person name="Garrido P."/>
            <person name="Gautier L."/>
            <person name="Goebel W."/>
            <person name="Gomez-Lopez N."/>
            <person name="Hain T."/>
            <person name="Hauf J."/>
            <person name="Jackson D."/>
            <person name="Jones L.-M."/>
            <person name="Kaerst U."/>
            <person name="Kreft J."/>
            <person name="Kuhn M."/>
            <person name="Kunst F."/>
            <person name="Kurapkat G."/>
            <person name="Madueno E."/>
            <person name="Maitournam A."/>
            <person name="Mata Vicente J."/>
            <person name="Ng E."/>
            <person name="Nedjari H."/>
            <person name="Nordsiek G."/>
            <person name="Novella S."/>
            <person name="de Pablos B."/>
            <person name="Perez-Diaz J.-C."/>
            <person name="Purcell R."/>
            <person name="Remmel B."/>
            <person name="Rose M."/>
            <person name="Schlueter T."/>
            <person name="Simoes N."/>
            <person name="Tierrez A."/>
            <person name="Vazquez-Boland J.-A."/>
            <person name="Voss H."/>
            <person name="Wehland J."/>
            <person name="Cossart P."/>
        </authorList>
    </citation>
    <scope>NUCLEOTIDE SEQUENCE [LARGE SCALE GENOMIC DNA]</scope>
    <source>
        <strain>ATCC BAA-680 / CLIP 11262</strain>
    </source>
</reference>
<name>RS21_LISIN</name>
<protein>
    <recommendedName>
        <fullName evidence="2">Small ribosomal subunit protein bS21</fullName>
    </recommendedName>
    <alternativeName>
        <fullName>30S ribosomal protein S21</fullName>
    </alternativeName>
</protein>
<feature type="chain" id="PRO_0000178349" description="Small ribosomal subunit protein bS21">
    <location>
        <begin position="1"/>
        <end position="57"/>
    </location>
</feature>
<feature type="region of interest" description="Disordered" evidence="1">
    <location>
        <begin position="24"/>
        <end position="57"/>
    </location>
</feature>
<feature type="compositionally biased region" description="Basic and acidic residues" evidence="1">
    <location>
        <begin position="31"/>
        <end position="42"/>
    </location>
</feature>
<feature type="compositionally biased region" description="Basic residues" evidence="1">
    <location>
        <begin position="43"/>
        <end position="57"/>
    </location>
</feature>
<keyword id="KW-0687">Ribonucleoprotein</keyword>
<keyword id="KW-0689">Ribosomal protein</keyword>
<sequence>MSKTVVRKNESLEDALRRFKRTVSKSGTLQESRKREFYEKPSVKRKKKSEAARKRKF</sequence>
<accession>P0A4C0</accession>
<accession>Q9S5A0</accession>
<proteinExistence type="inferred from homology"/>
<dbReference type="EMBL" id="AL596168">
    <property type="protein sequence ID" value="CAC96737.1"/>
    <property type="molecule type" value="Genomic_DNA"/>
</dbReference>
<dbReference type="PIR" id="AI1620">
    <property type="entry name" value="AI1620"/>
</dbReference>
<dbReference type="RefSeq" id="WP_003719762.1">
    <property type="nucleotide sequence ID" value="NC_003212.1"/>
</dbReference>
<dbReference type="SMR" id="P0A4C0"/>
<dbReference type="STRING" id="272626.gene:17565837"/>
<dbReference type="GeneID" id="93239346"/>
<dbReference type="KEGG" id="lin:rpsU"/>
<dbReference type="eggNOG" id="COG0828">
    <property type="taxonomic scope" value="Bacteria"/>
</dbReference>
<dbReference type="HOGENOM" id="CLU_159258_3_2_9"/>
<dbReference type="OrthoDB" id="9799244at2"/>
<dbReference type="Proteomes" id="UP000002513">
    <property type="component" value="Chromosome"/>
</dbReference>
<dbReference type="GO" id="GO:1990904">
    <property type="term" value="C:ribonucleoprotein complex"/>
    <property type="evidence" value="ECO:0007669"/>
    <property type="project" value="UniProtKB-KW"/>
</dbReference>
<dbReference type="GO" id="GO:0005840">
    <property type="term" value="C:ribosome"/>
    <property type="evidence" value="ECO:0007669"/>
    <property type="project" value="UniProtKB-KW"/>
</dbReference>
<dbReference type="GO" id="GO:0003735">
    <property type="term" value="F:structural constituent of ribosome"/>
    <property type="evidence" value="ECO:0007669"/>
    <property type="project" value="InterPro"/>
</dbReference>
<dbReference type="GO" id="GO:0006412">
    <property type="term" value="P:translation"/>
    <property type="evidence" value="ECO:0007669"/>
    <property type="project" value="UniProtKB-UniRule"/>
</dbReference>
<dbReference type="Gene3D" id="1.20.5.1150">
    <property type="entry name" value="Ribosomal protein S8"/>
    <property type="match status" value="1"/>
</dbReference>
<dbReference type="HAMAP" id="MF_00358">
    <property type="entry name" value="Ribosomal_bS21"/>
    <property type="match status" value="1"/>
</dbReference>
<dbReference type="InterPro" id="IPR001911">
    <property type="entry name" value="Ribosomal_bS21"/>
</dbReference>
<dbReference type="InterPro" id="IPR018278">
    <property type="entry name" value="Ribosomal_bS21_CS"/>
</dbReference>
<dbReference type="InterPro" id="IPR038380">
    <property type="entry name" value="Ribosomal_bS21_sf"/>
</dbReference>
<dbReference type="NCBIfam" id="TIGR00030">
    <property type="entry name" value="S21p"/>
    <property type="match status" value="1"/>
</dbReference>
<dbReference type="PANTHER" id="PTHR21109">
    <property type="entry name" value="MITOCHONDRIAL 28S RIBOSOMAL PROTEIN S21"/>
    <property type="match status" value="1"/>
</dbReference>
<dbReference type="PANTHER" id="PTHR21109:SF22">
    <property type="entry name" value="SMALL RIBOSOMAL SUBUNIT PROTEIN BS21"/>
    <property type="match status" value="1"/>
</dbReference>
<dbReference type="Pfam" id="PF01165">
    <property type="entry name" value="Ribosomal_S21"/>
    <property type="match status" value="1"/>
</dbReference>
<dbReference type="PRINTS" id="PR00976">
    <property type="entry name" value="RIBOSOMALS21"/>
</dbReference>
<dbReference type="PROSITE" id="PS01181">
    <property type="entry name" value="RIBOSOMAL_S21"/>
    <property type="match status" value="1"/>
</dbReference>
<evidence type="ECO:0000256" key="1">
    <source>
        <dbReference type="SAM" id="MobiDB-lite"/>
    </source>
</evidence>
<evidence type="ECO:0000305" key="2"/>